<keyword id="KW-0131">Cell cycle</keyword>
<keyword id="KW-0132">Cell division</keyword>
<keyword id="KW-0159">Chromosome partition</keyword>
<keyword id="KW-0963">Cytoplasm</keyword>
<keyword id="KW-0226">DNA condensation</keyword>
<feature type="chain" id="PRO_0000206805" description="Chromosome partition protein MukE">
    <location>
        <begin position="1"/>
        <end position="232"/>
    </location>
</feature>
<feature type="region of interest" description="Disordered" evidence="2">
    <location>
        <begin position="203"/>
        <end position="232"/>
    </location>
</feature>
<feature type="compositionally biased region" description="Acidic residues" evidence="2">
    <location>
        <begin position="214"/>
        <end position="232"/>
    </location>
</feature>
<name>MUKE_VIBPA</name>
<proteinExistence type="inferred from homology"/>
<gene>
    <name evidence="1" type="primary">mukE</name>
    <name type="ordered locus">VP1036</name>
</gene>
<accession>Q87QW3</accession>
<organism>
    <name type="scientific">Vibrio parahaemolyticus serotype O3:K6 (strain RIMD 2210633)</name>
    <dbReference type="NCBI Taxonomy" id="223926"/>
    <lineage>
        <taxon>Bacteria</taxon>
        <taxon>Pseudomonadati</taxon>
        <taxon>Pseudomonadota</taxon>
        <taxon>Gammaproteobacteria</taxon>
        <taxon>Vibrionales</taxon>
        <taxon>Vibrionaceae</taxon>
        <taxon>Vibrio</taxon>
    </lineage>
</organism>
<reference key="1">
    <citation type="journal article" date="2003" name="Lancet">
        <title>Genome sequence of Vibrio parahaemolyticus: a pathogenic mechanism distinct from that of V. cholerae.</title>
        <authorList>
            <person name="Makino K."/>
            <person name="Oshima K."/>
            <person name="Kurokawa K."/>
            <person name="Yokoyama K."/>
            <person name="Uda T."/>
            <person name="Tagomori K."/>
            <person name="Iijima Y."/>
            <person name="Najima M."/>
            <person name="Nakano M."/>
            <person name="Yamashita A."/>
            <person name="Kubota Y."/>
            <person name="Kimura S."/>
            <person name="Yasunaga T."/>
            <person name="Honda T."/>
            <person name="Shinagawa H."/>
            <person name="Hattori M."/>
            <person name="Iida T."/>
        </authorList>
    </citation>
    <scope>NUCLEOTIDE SEQUENCE [LARGE SCALE GENOMIC DNA]</scope>
    <source>
        <strain>RIMD 2210633</strain>
    </source>
</reference>
<dbReference type="EMBL" id="BA000031">
    <property type="protein sequence ID" value="BAC59299.1"/>
    <property type="status" value="ALT_INIT"/>
    <property type="molecule type" value="Genomic_DNA"/>
</dbReference>
<dbReference type="RefSeq" id="NP_797415.1">
    <property type="nucleotide sequence ID" value="NC_004603.1"/>
</dbReference>
<dbReference type="SMR" id="Q87QW3"/>
<dbReference type="KEGG" id="vpa:VP1036"/>
<dbReference type="PATRIC" id="fig|223926.6.peg.982"/>
<dbReference type="eggNOG" id="COG3095">
    <property type="taxonomic scope" value="Bacteria"/>
</dbReference>
<dbReference type="HOGENOM" id="CLU_1146408_0_0_6"/>
<dbReference type="Proteomes" id="UP000002493">
    <property type="component" value="Chromosome 1"/>
</dbReference>
<dbReference type="GO" id="GO:0005737">
    <property type="term" value="C:cytoplasm"/>
    <property type="evidence" value="ECO:0007669"/>
    <property type="project" value="UniProtKB-UniRule"/>
</dbReference>
<dbReference type="GO" id="GO:0009295">
    <property type="term" value="C:nucleoid"/>
    <property type="evidence" value="ECO:0007669"/>
    <property type="project" value="UniProtKB-SubCell"/>
</dbReference>
<dbReference type="GO" id="GO:0051301">
    <property type="term" value="P:cell division"/>
    <property type="evidence" value="ECO:0007669"/>
    <property type="project" value="UniProtKB-KW"/>
</dbReference>
<dbReference type="GO" id="GO:0030261">
    <property type="term" value="P:chromosome condensation"/>
    <property type="evidence" value="ECO:0007669"/>
    <property type="project" value="UniProtKB-KW"/>
</dbReference>
<dbReference type="GO" id="GO:0007059">
    <property type="term" value="P:chromosome segregation"/>
    <property type="evidence" value="ECO:0007669"/>
    <property type="project" value="UniProtKB-UniRule"/>
</dbReference>
<dbReference type="GO" id="GO:0006260">
    <property type="term" value="P:DNA replication"/>
    <property type="evidence" value="ECO:0007669"/>
    <property type="project" value="UniProtKB-UniRule"/>
</dbReference>
<dbReference type="Gene3D" id="1.10.10.2250">
    <property type="match status" value="1"/>
</dbReference>
<dbReference type="Gene3D" id="1.10.10.2260">
    <property type="entry name" value="MukE-like family, C-terminal domain"/>
    <property type="match status" value="1"/>
</dbReference>
<dbReference type="HAMAP" id="MF_01802">
    <property type="entry name" value="MukE"/>
    <property type="match status" value="1"/>
</dbReference>
<dbReference type="InterPro" id="IPR042037">
    <property type="entry name" value="MukE_C"/>
</dbReference>
<dbReference type="InterPro" id="IPR042038">
    <property type="entry name" value="MukE_N"/>
</dbReference>
<dbReference type="InterPro" id="IPR007385">
    <property type="entry name" value="Scp_MukE"/>
</dbReference>
<dbReference type="NCBIfam" id="NF003602">
    <property type="entry name" value="PRK05256.1"/>
    <property type="match status" value="1"/>
</dbReference>
<dbReference type="Pfam" id="PF04288">
    <property type="entry name" value="MukE"/>
    <property type="match status" value="1"/>
</dbReference>
<protein>
    <recommendedName>
        <fullName evidence="1">Chromosome partition protein MukE</fullName>
    </recommendedName>
</protein>
<sequence length="232" mass="26275">MSDNLAKAISNPLFPALDSMLRAGRHISTEDLDNHALLSDFELELSSFYQRYNTELVKAPEGFFYLRPRSTSLIGRSVLSELDMLVGKVLCFLYLSPERLAHEGIFTNQELYDELLALADEKKLMKLVTNRATGSDLDKEKLFEKVRTSLRRLRRLGMIINIGETGKFSISEAVFRFGADVRVGDDIREAQLRLIRDGEAVVHTKEPSQGSLLSEEDQEEQAQEEMTEEGEA</sequence>
<evidence type="ECO:0000255" key="1">
    <source>
        <dbReference type="HAMAP-Rule" id="MF_01802"/>
    </source>
</evidence>
<evidence type="ECO:0000256" key="2">
    <source>
        <dbReference type="SAM" id="MobiDB-lite"/>
    </source>
</evidence>
<evidence type="ECO:0000305" key="3"/>
<comment type="function">
    <text evidence="1">Involved in chromosome condensation, segregation and cell cycle progression. May participate in facilitating chromosome segregation by condensation DNA from both sides of a centrally located replisome during cell division. Probably acts via its interaction with MukB and MukF.</text>
</comment>
<comment type="subunit">
    <text evidence="1">Interacts, and probably forms a ternary complex, with MukF and MukB. The complex formation is stimulated by calcium or magnesium.</text>
</comment>
<comment type="subcellular location">
    <subcellularLocation>
        <location evidence="1">Cytoplasm</location>
        <location evidence="1">Nucleoid</location>
    </subcellularLocation>
    <text evidence="1">Restricted to the nucleoid region.</text>
</comment>
<comment type="similarity">
    <text evidence="1">Belongs to the MukE family.</text>
</comment>
<comment type="sequence caution" evidence="3">
    <conflict type="erroneous initiation">
        <sequence resource="EMBL-CDS" id="BAC59299"/>
    </conflict>
</comment>